<protein>
    <recommendedName>
        <fullName>DNA replication complex GINS protein PSF1</fullName>
    </recommendedName>
</protein>
<accession>Q75E92</accession>
<evidence type="ECO:0000250" key="1"/>
<evidence type="ECO:0000305" key="2"/>
<dbReference type="EMBL" id="AE016814">
    <property type="protein sequence ID" value="AAS50555.1"/>
    <property type="molecule type" value="Genomic_DNA"/>
</dbReference>
<dbReference type="RefSeq" id="NP_982731.1">
    <property type="nucleotide sequence ID" value="NM_208084.1"/>
</dbReference>
<dbReference type="SMR" id="Q75E92"/>
<dbReference type="FunCoup" id="Q75E92">
    <property type="interactions" value="473"/>
</dbReference>
<dbReference type="STRING" id="284811.Q75E92"/>
<dbReference type="EnsemblFungi" id="AAS50555">
    <property type="protein sequence ID" value="AAS50555"/>
    <property type="gene ID" value="AGOS_AAR188W"/>
</dbReference>
<dbReference type="GeneID" id="4618769"/>
<dbReference type="KEGG" id="ago:AGOS_AAR188W"/>
<dbReference type="eggNOG" id="KOG3303">
    <property type="taxonomic scope" value="Eukaryota"/>
</dbReference>
<dbReference type="HOGENOM" id="CLU_079191_0_0_1"/>
<dbReference type="InParanoid" id="Q75E92"/>
<dbReference type="OMA" id="MFCEKAT"/>
<dbReference type="OrthoDB" id="10252587at2759"/>
<dbReference type="Proteomes" id="UP000000591">
    <property type="component" value="Chromosome I"/>
</dbReference>
<dbReference type="GO" id="GO:0071162">
    <property type="term" value="C:CMG complex"/>
    <property type="evidence" value="ECO:0007669"/>
    <property type="project" value="EnsemblFungi"/>
</dbReference>
<dbReference type="GO" id="GO:0000811">
    <property type="term" value="C:GINS complex"/>
    <property type="evidence" value="ECO:0000318"/>
    <property type="project" value="GO_Central"/>
</dbReference>
<dbReference type="GO" id="GO:0043596">
    <property type="term" value="C:nuclear replication fork"/>
    <property type="evidence" value="ECO:0007669"/>
    <property type="project" value="EnsemblFungi"/>
</dbReference>
<dbReference type="GO" id="GO:1902983">
    <property type="term" value="P:DNA strand elongation involved in mitotic DNA replication"/>
    <property type="evidence" value="ECO:0000318"/>
    <property type="project" value="GO_Central"/>
</dbReference>
<dbReference type="GO" id="GO:0000727">
    <property type="term" value="P:double-strand break repair via break-induced replication"/>
    <property type="evidence" value="ECO:0007669"/>
    <property type="project" value="EnsemblFungi"/>
</dbReference>
<dbReference type="GO" id="GO:1902975">
    <property type="term" value="P:mitotic DNA replication initiation"/>
    <property type="evidence" value="ECO:0007669"/>
    <property type="project" value="EnsemblFungi"/>
</dbReference>
<dbReference type="CDD" id="cd11710">
    <property type="entry name" value="GINS_A_psf1"/>
    <property type="match status" value="1"/>
</dbReference>
<dbReference type="CDD" id="cd21696">
    <property type="entry name" value="GINS_B_Psf1"/>
    <property type="match status" value="1"/>
</dbReference>
<dbReference type="FunFam" id="1.20.58.1030:FF:000003">
    <property type="entry name" value="DNA replication complex GINS protein PSF1"/>
    <property type="match status" value="1"/>
</dbReference>
<dbReference type="Gene3D" id="1.20.58.1030">
    <property type="match status" value="1"/>
</dbReference>
<dbReference type="InterPro" id="IPR021151">
    <property type="entry name" value="GINS_A"/>
</dbReference>
<dbReference type="InterPro" id="IPR036224">
    <property type="entry name" value="GINS_bundle-like_dom_sf"/>
</dbReference>
<dbReference type="InterPro" id="IPR005339">
    <property type="entry name" value="GINS_Psf1"/>
</dbReference>
<dbReference type="InterPro" id="IPR056783">
    <property type="entry name" value="PSF1_C"/>
</dbReference>
<dbReference type="PANTHER" id="PTHR12914:SF2">
    <property type="entry name" value="DNA REPLICATION COMPLEX GINS PROTEIN PSF1"/>
    <property type="match status" value="1"/>
</dbReference>
<dbReference type="PANTHER" id="PTHR12914">
    <property type="entry name" value="PARTNER OF SLD5"/>
    <property type="match status" value="1"/>
</dbReference>
<dbReference type="Pfam" id="PF24997">
    <property type="entry name" value="PSF1_C"/>
    <property type="match status" value="1"/>
</dbReference>
<dbReference type="Pfam" id="PF05916">
    <property type="entry name" value="Sld5"/>
    <property type="match status" value="1"/>
</dbReference>
<dbReference type="SUPFAM" id="SSF158573">
    <property type="entry name" value="GINS helical bundle-like"/>
    <property type="match status" value="1"/>
</dbReference>
<sequence length="203" mass="23184">MYGDVANKLVLEAKRTDHLANGSATLQLPMFQDEMVRVILKEVSQLQRNAEYLKLQEDSGKLSKCQYFVTMLCMERNKRCLLAYQKTRSEILDAIAWENNGLDTMDLLSNKGHDSGNLSPYEQEYLREYSQLISDLTAGELMDIDLAGSLTPPSDVFIDVRVLKDAGEIQTEYGVFNLIKDSQFFVRQADVERLIQQGYLQKL</sequence>
<gene>
    <name type="primary">PSF1</name>
    <name type="ordered locus">AAR188W</name>
</gene>
<feature type="chain" id="PRO_0000278392" description="DNA replication complex GINS protein PSF1">
    <location>
        <begin position="1"/>
        <end position="203"/>
    </location>
</feature>
<organism>
    <name type="scientific">Eremothecium gossypii (strain ATCC 10895 / CBS 109.51 / FGSC 9923 / NRRL Y-1056)</name>
    <name type="common">Yeast</name>
    <name type="synonym">Ashbya gossypii</name>
    <dbReference type="NCBI Taxonomy" id="284811"/>
    <lineage>
        <taxon>Eukaryota</taxon>
        <taxon>Fungi</taxon>
        <taxon>Dikarya</taxon>
        <taxon>Ascomycota</taxon>
        <taxon>Saccharomycotina</taxon>
        <taxon>Saccharomycetes</taxon>
        <taxon>Saccharomycetales</taxon>
        <taxon>Saccharomycetaceae</taxon>
        <taxon>Eremothecium</taxon>
    </lineage>
</organism>
<name>PSF1_EREGS</name>
<reference key="1">
    <citation type="journal article" date="2004" name="Science">
        <title>The Ashbya gossypii genome as a tool for mapping the ancient Saccharomyces cerevisiae genome.</title>
        <authorList>
            <person name="Dietrich F.S."/>
            <person name="Voegeli S."/>
            <person name="Brachat S."/>
            <person name="Lerch A."/>
            <person name="Gates K."/>
            <person name="Steiner S."/>
            <person name="Mohr C."/>
            <person name="Poehlmann R."/>
            <person name="Luedi P."/>
            <person name="Choi S."/>
            <person name="Wing R.A."/>
            <person name="Flavier A."/>
            <person name="Gaffney T.D."/>
            <person name="Philippsen P."/>
        </authorList>
    </citation>
    <scope>NUCLEOTIDE SEQUENCE [LARGE SCALE GENOMIC DNA]</scope>
    <source>
        <strain>ATCC 10895 / CBS 109.51 / FGSC 9923 / NRRL Y-1056</strain>
    </source>
</reference>
<reference key="2">
    <citation type="journal article" date="2013" name="G3 (Bethesda)">
        <title>Genomes of Ashbya fungi isolated from insects reveal four mating-type loci, numerous translocations, lack of transposons, and distinct gene duplications.</title>
        <authorList>
            <person name="Dietrich F.S."/>
            <person name="Voegeli S."/>
            <person name="Kuo S."/>
            <person name="Philippsen P."/>
        </authorList>
    </citation>
    <scope>GENOME REANNOTATION</scope>
    <source>
        <strain>ATCC 10895 / CBS 109.51 / FGSC 9923 / NRRL Y-1056</strain>
    </source>
</reference>
<keyword id="KW-0235">DNA replication</keyword>
<keyword id="KW-0539">Nucleus</keyword>
<keyword id="KW-1185">Reference proteome</keyword>
<proteinExistence type="inferred from homology"/>
<comment type="function">
    <text evidence="1">The GINS complex plays an essential role in the initiation of DNA replication.</text>
</comment>
<comment type="subunit">
    <text evidence="1">Component of the GINS complex which is a heterotetramer of SLD5, PSF1, PSF2 and PSF3.</text>
</comment>
<comment type="subcellular location">
    <subcellularLocation>
        <location evidence="1">Nucleus</location>
    </subcellularLocation>
</comment>
<comment type="similarity">
    <text evidence="2">Belongs to the GINS1/PSF1 family.</text>
</comment>